<proteinExistence type="inferred from homology"/>
<accession>P59157</accession>
<evidence type="ECO:0000255" key="1">
    <source>
        <dbReference type="HAMAP-Rule" id="MF_00607"/>
    </source>
</evidence>
<keyword id="KW-0963">Cytoplasm</keyword>
<keyword id="KW-0489">Methyltransferase</keyword>
<keyword id="KW-1185">Reference proteome</keyword>
<keyword id="KW-0694">RNA-binding</keyword>
<keyword id="KW-0698">rRNA processing</keyword>
<keyword id="KW-0949">S-adenosyl-L-methionine</keyword>
<keyword id="KW-0808">Transferase</keyword>
<dbReference type="EC" id="2.1.1.182" evidence="1"/>
<dbReference type="EMBL" id="BA000039">
    <property type="protein sequence ID" value="BAC08210.1"/>
    <property type="molecule type" value="Genomic_DNA"/>
</dbReference>
<dbReference type="RefSeq" id="NP_681448.1">
    <property type="nucleotide sequence ID" value="NC_004113.1"/>
</dbReference>
<dbReference type="SMR" id="P59157"/>
<dbReference type="STRING" id="197221.gene:10747249"/>
<dbReference type="EnsemblBacteria" id="BAC08210">
    <property type="protein sequence ID" value="BAC08210"/>
    <property type="gene ID" value="BAC08210"/>
</dbReference>
<dbReference type="KEGG" id="tel:tlr0659"/>
<dbReference type="PATRIC" id="fig|197221.4.peg.698"/>
<dbReference type="eggNOG" id="COG0030">
    <property type="taxonomic scope" value="Bacteria"/>
</dbReference>
<dbReference type="Proteomes" id="UP000000440">
    <property type="component" value="Chromosome"/>
</dbReference>
<dbReference type="GO" id="GO:0005829">
    <property type="term" value="C:cytosol"/>
    <property type="evidence" value="ECO:0007669"/>
    <property type="project" value="TreeGrafter"/>
</dbReference>
<dbReference type="GO" id="GO:0052908">
    <property type="term" value="F:16S rRNA (adenine(1518)-N(6)/adenine(1519)-N(6))-dimethyltransferase activity"/>
    <property type="evidence" value="ECO:0007669"/>
    <property type="project" value="UniProtKB-EC"/>
</dbReference>
<dbReference type="GO" id="GO:0003723">
    <property type="term" value="F:RNA binding"/>
    <property type="evidence" value="ECO:0007669"/>
    <property type="project" value="UniProtKB-KW"/>
</dbReference>
<dbReference type="CDD" id="cd02440">
    <property type="entry name" value="AdoMet_MTases"/>
    <property type="match status" value="1"/>
</dbReference>
<dbReference type="Gene3D" id="1.10.8.100">
    <property type="entry name" value="Ribosomal RNA adenine dimethylase-like, domain 2"/>
    <property type="match status" value="1"/>
</dbReference>
<dbReference type="Gene3D" id="3.40.50.150">
    <property type="entry name" value="Vaccinia Virus protein VP39"/>
    <property type="match status" value="1"/>
</dbReference>
<dbReference type="HAMAP" id="MF_00607">
    <property type="entry name" value="16SrRNA_methyltr_A"/>
    <property type="match status" value="1"/>
</dbReference>
<dbReference type="InterPro" id="IPR001737">
    <property type="entry name" value="KsgA/Erm"/>
</dbReference>
<dbReference type="InterPro" id="IPR023165">
    <property type="entry name" value="rRNA_Ade_diMease-like_C"/>
</dbReference>
<dbReference type="InterPro" id="IPR020596">
    <property type="entry name" value="rRNA_Ade_Mease_Trfase_CS"/>
</dbReference>
<dbReference type="InterPro" id="IPR020598">
    <property type="entry name" value="rRNA_Ade_methylase_Trfase_N"/>
</dbReference>
<dbReference type="InterPro" id="IPR011530">
    <property type="entry name" value="rRNA_adenine_dimethylase"/>
</dbReference>
<dbReference type="InterPro" id="IPR029063">
    <property type="entry name" value="SAM-dependent_MTases_sf"/>
</dbReference>
<dbReference type="NCBIfam" id="TIGR00755">
    <property type="entry name" value="ksgA"/>
    <property type="match status" value="1"/>
</dbReference>
<dbReference type="PANTHER" id="PTHR11727">
    <property type="entry name" value="DIMETHYLADENOSINE TRANSFERASE"/>
    <property type="match status" value="1"/>
</dbReference>
<dbReference type="PANTHER" id="PTHR11727:SF7">
    <property type="entry name" value="DIMETHYLADENOSINE TRANSFERASE-RELATED"/>
    <property type="match status" value="1"/>
</dbReference>
<dbReference type="Pfam" id="PF00398">
    <property type="entry name" value="RrnaAD"/>
    <property type="match status" value="1"/>
</dbReference>
<dbReference type="SMART" id="SM00650">
    <property type="entry name" value="rADc"/>
    <property type="match status" value="1"/>
</dbReference>
<dbReference type="SUPFAM" id="SSF53335">
    <property type="entry name" value="S-adenosyl-L-methionine-dependent methyltransferases"/>
    <property type="match status" value="1"/>
</dbReference>
<dbReference type="PROSITE" id="PS01131">
    <property type="entry name" value="RRNA_A_DIMETH"/>
    <property type="match status" value="1"/>
</dbReference>
<dbReference type="PROSITE" id="PS51689">
    <property type="entry name" value="SAM_RNA_A_N6_MT"/>
    <property type="match status" value="1"/>
</dbReference>
<name>RSMA_THEVB</name>
<organism>
    <name type="scientific">Thermosynechococcus vestitus (strain NIES-2133 / IAM M-273 / BP-1)</name>
    <dbReference type="NCBI Taxonomy" id="197221"/>
    <lineage>
        <taxon>Bacteria</taxon>
        <taxon>Bacillati</taxon>
        <taxon>Cyanobacteriota</taxon>
        <taxon>Cyanophyceae</taxon>
        <taxon>Acaryochloridales</taxon>
        <taxon>Thermosynechococcaceae</taxon>
        <taxon>Thermosynechococcus</taxon>
    </lineage>
</organism>
<protein>
    <recommendedName>
        <fullName evidence="1">Ribosomal RNA small subunit methyltransferase A</fullName>
        <ecNumber evidence="1">2.1.1.182</ecNumber>
    </recommendedName>
    <alternativeName>
        <fullName evidence="1">16S rRNA (adenine(1518)-N(6)/adenine(1519)-N(6))-dimethyltransferase</fullName>
    </alternativeName>
    <alternativeName>
        <fullName evidence="1">16S rRNA dimethyladenosine transferase</fullName>
    </alternativeName>
    <alternativeName>
        <fullName evidence="1">16S rRNA dimethylase</fullName>
    </alternativeName>
    <alternativeName>
        <fullName evidence="1">S-adenosylmethionine-6-N', N'-adenosyl(rRNA) dimethyltransferase</fullName>
    </alternativeName>
</protein>
<gene>
    <name evidence="1" type="primary">rsmA</name>
    <name evidence="1" type="synonym">ksgA</name>
    <name type="ordered locus">tlr0659</name>
</gene>
<feature type="chain" id="PRO_0000101625" description="Ribosomal RNA small subunit methyltransferase A">
    <location>
        <begin position="1"/>
        <end position="265"/>
    </location>
</feature>
<feature type="binding site" evidence="1">
    <location>
        <position position="11"/>
    </location>
    <ligand>
        <name>S-adenosyl-L-methionine</name>
        <dbReference type="ChEBI" id="CHEBI:59789"/>
    </ligand>
</feature>
<feature type="binding site" evidence="1">
    <location>
        <position position="13"/>
    </location>
    <ligand>
        <name>S-adenosyl-L-methionine</name>
        <dbReference type="ChEBI" id="CHEBI:59789"/>
    </ligand>
</feature>
<feature type="binding site" evidence="1">
    <location>
        <position position="38"/>
    </location>
    <ligand>
        <name>S-adenosyl-L-methionine</name>
        <dbReference type="ChEBI" id="CHEBI:59789"/>
    </ligand>
</feature>
<feature type="binding site" evidence="1">
    <location>
        <position position="59"/>
    </location>
    <ligand>
        <name>S-adenosyl-L-methionine</name>
        <dbReference type="ChEBI" id="CHEBI:59789"/>
    </ligand>
</feature>
<feature type="binding site" evidence="1">
    <location>
        <position position="83"/>
    </location>
    <ligand>
        <name>S-adenosyl-L-methionine</name>
        <dbReference type="ChEBI" id="CHEBI:59789"/>
    </ligand>
</feature>
<feature type="binding site" evidence="1">
    <location>
        <position position="100"/>
    </location>
    <ligand>
        <name>S-adenosyl-L-methionine</name>
        <dbReference type="ChEBI" id="CHEBI:59789"/>
    </ligand>
</feature>
<reference key="1">
    <citation type="journal article" date="2002" name="DNA Res.">
        <title>Complete genome structure of the thermophilic cyanobacterium Thermosynechococcus elongatus BP-1.</title>
        <authorList>
            <person name="Nakamura Y."/>
            <person name="Kaneko T."/>
            <person name="Sato S."/>
            <person name="Ikeuchi M."/>
            <person name="Katoh H."/>
            <person name="Sasamoto S."/>
            <person name="Watanabe A."/>
            <person name="Iriguchi M."/>
            <person name="Kawashima K."/>
            <person name="Kimura T."/>
            <person name="Kishida Y."/>
            <person name="Kiyokawa C."/>
            <person name="Kohara M."/>
            <person name="Matsumoto M."/>
            <person name="Matsuno A."/>
            <person name="Nakazaki N."/>
            <person name="Shimpo S."/>
            <person name="Sugimoto M."/>
            <person name="Takeuchi C."/>
            <person name="Yamada M."/>
            <person name="Tabata S."/>
        </authorList>
    </citation>
    <scope>NUCLEOTIDE SEQUENCE [LARGE SCALE GENOMIC DNA]</scope>
    <source>
        <strain>NIES-2133 / IAM M-273 / BP-1</strain>
    </source>
</reference>
<sequence>MIRARKRFGQHWLRSEAILAQIIAAAELHPGDRVLEIGPGRGALTRPLLVSGAEVVAVELDRDLCGQLRRQFDSERFQLIEGDILRLDLAPLGCNKVVANIPYNITGPLLGHLLGSIARPRRPAFERLILLVQKEIGDRLMASPGSKAYGALSVRVQFLATCEKVCAVPPRAFQPPPKVDSVVVCLRPHRTLPRVGSPQWLETLLKQGFATRRKMLANALKSLVEPEQVRQALLQLGRDANSRAEALSLEDWLALSEVLRQLQQN</sequence>
<comment type="function">
    <text evidence="1">Specifically dimethylates two adjacent adenosines (A1518 and A1519) in the loop of a conserved hairpin near the 3'-end of 16S rRNA in the 30S particle. May play a critical role in biogenesis of 30S subunits.</text>
</comment>
<comment type="catalytic activity">
    <reaction evidence="1">
        <text>adenosine(1518)/adenosine(1519) in 16S rRNA + 4 S-adenosyl-L-methionine = N(6)-dimethyladenosine(1518)/N(6)-dimethyladenosine(1519) in 16S rRNA + 4 S-adenosyl-L-homocysteine + 4 H(+)</text>
        <dbReference type="Rhea" id="RHEA:19609"/>
        <dbReference type="Rhea" id="RHEA-COMP:10232"/>
        <dbReference type="Rhea" id="RHEA-COMP:10233"/>
        <dbReference type="ChEBI" id="CHEBI:15378"/>
        <dbReference type="ChEBI" id="CHEBI:57856"/>
        <dbReference type="ChEBI" id="CHEBI:59789"/>
        <dbReference type="ChEBI" id="CHEBI:74411"/>
        <dbReference type="ChEBI" id="CHEBI:74493"/>
        <dbReference type="EC" id="2.1.1.182"/>
    </reaction>
</comment>
<comment type="subcellular location">
    <subcellularLocation>
        <location evidence="1">Cytoplasm</location>
    </subcellularLocation>
</comment>
<comment type="similarity">
    <text evidence="1">Belongs to the class I-like SAM-binding methyltransferase superfamily. rRNA adenine N(6)-methyltransferase family. RsmA subfamily.</text>
</comment>